<protein>
    <recommendedName>
        <fullName>Probable serine/threonine-protein kinase SCO3848</fullName>
        <ecNumber>2.7.11.1</ecNumber>
    </recommendedName>
</protein>
<reference key="1">
    <citation type="journal article" date="2002" name="Nature">
        <title>Complete genome sequence of the model actinomycete Streptomyces coelicolor A3(2).</title>
        <authorList>
            <person name="Bentley S.D."/>
            <person name="Chater K.F."/>
            <person name="Cerdeno-Tarraga A.-M."/>
            <person name="Challis G.L."/>
            <person name="Thomson N.R."/>
            <person name="James K.D."/>
            <person name="Harris D.E."/>
            <person name="Quail M.A."/>
            <person name="Kieser H."/>
            <person name="Harper D."/>
            <person name="Bateman A."/>
            <person name="Brown S."/>
            <person name="Chandra G."/>
            <person name="Chen C.W."/>
            <person name="Collins M."/>
            <person name="Cronin A."/>
            <person name="Fraser A."/>
            <person name="Goble A."/>
            <person name="Hidalgo J."/>
            <person name="Hornsby T."/>
            <person name="Howarth S."/>
            <person name="Huang C.-H."/>
            <person name="Kieser T."/>
            <person name="Larke L."/>
            <person name="Murphy L.D."/>
            <person name="Oliver K."/>
            <person name="O'Neil S."/>
            <person name="Rabbinowitsch E."/>
            <person name="Rajandream M.A."/>
            <person name="Rutherford K.M."/>
            <person name="Rutter S."/>
            <person name="Seeger K."/>
            <person name="Saunders D."/>
            <person name="Sharp S."/>
            <person name="Squares R."/>
            <person name="Squares S."/>
            <person name="Taylor K."/>
            <person name="Warren T."/>
            <person name="Wietzorrek A."/>
            <person name="Woodward J.R."/>
            <person name="Barrell B.G."/>
            <person name="Parkhill J."/>
            <person name="Hopwood D.A."/>
        </authorList>
    </citation>
    <scope>NUCLEOTIDE SEQUENCE [LARGE SCALE GENOMIC DNA]</scope>
    <source>
        <strain>ATCC BAA-471 / A3(2) / M145</strain>
    </source>
</reference>
<feature type="chain" id="PRO_0000171237" description="Probable serine/threonine-protein kinase SCO3848">
    <location>
        <begin position="1"/>
        <end position="673"/>
    </location>
</feature>
<feature type="domain" description="Protein kinase" evidence="1">
    <location>
        <begin position="11"/>
        <end position="277"/>
    </location>
</feature>
<feature type="domain" description="PASTA 1" evidence="2">
    <location>
        <begin position="379"/>
        <end position="445"/>
    </location>
</feature>
<feature type="domain" description="PASTA 2" evidence="2">
    <location>
        <begin position="446"/>
        <end position="511"/>
    </location>
</feature>
<feature type="domain" description="PASTA 3" evidence="2">
    <location>
        <begin position="512"/>
        <end position="580"/>
    </location>
</feature>
<feature type="domain" description="PASTA 4" evidence="2">
    <location>
        <begin position="581"/>
        <end position="649"/>
    </location>
</feature>
<feature type="region of interest" description="Disordered" evidence="4">
    <location>
        <begin position="302"/>
        <end position="345"/>
    </location>
</feature>
<feature type="region of interest" description="Disordered" evidence="4">
    <location>
        <begin position="472"/>
        <end position="500"/>
    </location>
</feature>
<feature type="region of interest" description="Disordered" evidence="4">
    <location>
        <begin position="613"/>
        <end position="641"/>
    </location>
</feature>
<feature type="region of interest" description="Disordered" evidence="4">
    <location>
        <begin position="653"/>
        <end position="673"/>
    </location>
</feature>
<feature type="compositionally biased region" description="Polar residues" evidence="4">
    <location>
        <begin position="479"/>
        <end position="493"/>
    </location>
</feature>
<feature type="active site" description="Proton acceptor" evidence="1 3">
    <location>
        <position position="138"/>
    </location>
</feature>
<feature type="binding site" evidence="1">
    <location>
        <begin position="17"/>
        <end position="25"/>
    </location>
    <ligand>
        <name>ATP</name>
        <dbReference type="ChEBI" id="CHEBI:30616"/>
    </ligand>
</feature>
<feature type="binding site" evidence="1">
    <location>
        <position position="40"/>
    </location>
    <ligand>
        <name>ATP</name>
        <dbReference type="ChEBI" id="CHEBI:30616"/>
    </ligand>
</feature>
<proteinExistence type="inferred from homology"/>
<keyword id="KW-0067">ATP-binding</keyword>
<keyword id="KW-0418">Kinase</keyword>
<keyword id="KW-0547">Nucleotide-binding</keyword>
<keyword id="KW-1185">Reference proteome</keyword>
<keyword id="KW-0677">Repeat</keyword>
<keyword id="KW-0723">Serine/threonine-protein kinase</keyword>
<keyword id="KW-0808">Transferase</keyword>
<comment type="catalytic activity">
    <reaction>
        <text>L-seryl-[protein] + ATP = O-phospho-L-seryl-[protein] + ADP + H(+)</text>
        <dbReference type="Rhea" id="RHEA:17989"/>
        <dbReference type="Rhea" id="RHEA-COMP:9863"/>
        <dbReference type="Rhea" id="RHEA-COMP:11604"/>
        <dbReference type="ChEBI" id="CHEBI:15378"/>
        <dbReference type="ChEBI" id="CHEBI:29999"/>
        <dbReference type="ChEBI" id="CHEBI:30616"/>
        <dbReference type="ChEBI" id="CHEBI:83421"/>
        <dbReference type="ChEBI" id="CHEBI:456216"/>
        <dbReference type="EC" id="2.7.11.1"/>
    </reaction>
</comment>
<comment type="catalytic activity">
    <reaction>
        <text>L-threonyl-[protein] + ATP = O-phospho-L-threonyl-[protein] + ADP + H(+)</text>
        <dbReference type="Rhea" id="RHEA:46608"/>
        <dbReference type="Rhea" id="RHEA-COMP:11060"/>
        <dbReference type="Rhea" id="RHEA-COMP:11605"/>
        <dbReference type="ChEBI" id="CHEBI:15378"/>
        <dbReference type="ChEBI" id="CHEBI:30013"/>
        <dbReference type="ChEBI" id="CHEBI:30616"/>
        <dbReference type="ChEBI" id="CHEBI:61977"/>
        <dbReference type="ChEBI" id="CHEBI:456216"/>
        <dbReference type="EC" id="2.7.11.1"/>
    </reaction>
</comment>
<comment type="similarity">
    <text evidence="1">Belongs to the protein kinase superfamily. Ser/Thr protein kinase family.</text>
</comment>
<dbReference type="EC" id="2.7.11.1"/>
<dbReference type="EMBL" id="AL939118">
    <property type="protein sequence ID" value="CAB45215.1"/>
    <property type="molecule type" value="Genomic_DNA"/>
</dbReference>
<dbReference type="PIR" id="T36717">
    <property type="entry name" value="T36717"/>
</dbReference>
<dbReference type="RefSeq" id="NP_628036.1">
    <property type="nucleotide sequence ID" value="NC_003888.3"/>
</dbReference>
<dbReference type="SMR" id="Q9XA16"/>
<dbReference type="FunCoup" id="Q9XA16">
    <property type="interactions" value="2"/>
</dbReference>
<dbReference type="STRING" id="100226.gene:17761473"/>
<dbReference type="PaxDb" id="100226-SCO3848"/>
<dbReference type="DNASU" id="1099284"/>
<dbReference type="KEGG" id="sco:SCO3848"/>
<dbReference type="PATRIC" id="fig|100226.15.peg.3919"/>
<dbReference type="eggNOG" id="COG0515">
    <property type="taxonomic scope" value="Bacteria"/>
</dbReference>
<dbReference type="HOGENOM" id="CLU_000288_135_2_11"/>
<dbReference type="InParanoid" id="Q9XA16"/>
<dbReference type="OrthoDB" id="9762169at2"/>
<dbReference type="PhylomeDB" id="Q9XA16"/>
<dbReference type="Proteomes" id="UP000001973">
    <property type="component" value="Chromosome"/>
</dbReference>
<dbReference type="GO" id="GO:0005524">
    <property type="term" value="F:ATP binding"/>
    <property type="evidence" value="ECO:0007669"/>
    <property type="project" value="UniProtKB-KW"/>
</dbReference>
<dbReference type="GO" id="GO:0106310">
    <property type="term" value="F:protein serine kinase activity"/>
    <property type="evidence" value="ECO:0007669"/>
    <property type="project" value="RHEA"/>
</dbReference>
<dbReference type="GO" id="GO:0004674">
    <property type="term" value="F:protein serine/threonine kinase activity"/>
    <property type="evidence" value="ECO:0000318"/>
    <property type="project" value="GO_Central"/>
</dbReference>
<dbReference type="CDD" id="cd06577">
    <property type="entry name" value="PASTA_pknB"/>
    <property type="match status" value="4"/>
</dbReference>
<dbReference type="CDD" id="cd14014">
    <property type="entry name" value="STKc_PknB_like"/>
    <property type="match status" value="1"/>
</dbReference>
<dbReference type="FunFam" id="1.10.510.10:FF:000021">
    <property type="entry name" value="Serine/threonine protein kinase"/>
    <property type="match status" value="1"/>
</dbReference>
<dbReference type="FunFam" id="3.30.200.20:FF:000035">
    <property type="entry name" value="Serine/threonine protein kinase Stk1"/>
    <property type="match status" value="1"/>
</dbReference>
<dbReference type="Gene3D" id="3.30.10.20">
    <property type="match status" value="4"/>
</dbReference>
<dbReference type="Gene3D" id="3.30.200.20">
    <property type="entry name" value="Phosphorylase Kinase, domain 1"/>
    <property type="match status" value="1"/>
</dbReference>
<dbReference type="Gene3D" id="1.10.510.10">
    <property type="entry name" value="Transferase(Phosphotransferase) domain 1"/>
    <property type="match status" value="1"/>
</dbReference>
<dbReference type="InterPro" id="IPR011009">
    <property type="entry name" value="Kinase-like_dom_sf"/>
</dbReference>
<dbReference type="InterPro" id="IPR005543">
    <property type="entry name" value="PASTA_dom"/>
</dbReference>
<dbReference type="InterPro" id="IPR000719">
    <property type="entry name" value="Prot_kinase_dom"/>
</dbReference>
<dbReference type="InterPro" id="IPR017441">
    <property type="entry name" value="Protein_kinase_ATP_BS"/>
</dbReference>
<dbReference type="InterPro" id="IPR008271">
    <property type="entry name" value="Ser/Thr_kinase_AS"/>
</dbReference>
<dbReference type="NCBIfam" id="NF033483">
    <property type="entry name" value="PknB_PASTA_kin"/>
    <property type="match status" value="1"/>
</dbReference>
<dbReference type="PANTHER" id="PTHR43289">
    <property type="entry name" value="MITOGEN-ACTIVATED PROTEIN KINASE KINASE KINASE 20-RELATED"/>
    <property type="match status" value="1"/>
</dbReference>
<dbReference type="PANTHER" id="PTHR43289:SF6">
    <property type="entry name" value="SERINE_THREONINE-PROTEIN KINASE NEKL-3"/>
    <property type="match status" value="1"/>
</dbReference>
<dbReference type="Pfam" id="PF03793">
    <property type="entry name" value="PASTA"/>
    <property type="match status" value="4"/>
</dbReference>
<dbReference type="Pfam" id="PF00069">
    <property type="entry name" value="Pkinase"/>
    <property type="match status" value="1"/>
</dbReference>
<dbReference type="SMART" id="SM00740">
    <property type="entry name" value="PASTA"/>
    <property type="match status" value="4"/>
</dbReference>
<dbReference type="SMART" id="SM00220">
    <property type="entry name" value="S_TKc"/>
    <property type="match status" value="1"/>
</dbReference>
<dbReference type="SUPFAM" id="SSF54184">
    <property type="entry name" value="Penicillin-binding protein 2x (pbp-2x), c-terminal domain"/>
    <property type="match status" value="1"/>
</dbReference>
<dbReference type="SUPFAM" id="SSF56112">
    <property type="entry name" value="Protein kinase-like (PK-like)"/>
    <property type="match status" value="1"/>
</dbReference>
<dbReference type="PROSITE" id="PS51178">
    <property type="entry name" value="PASTA"/>
    <property type="match status" value="4"/>
</dbReference>
<dbReference type="PROSITE" id="PS00107">
    <property type="entry name" value="PROTEIN_KINASE_ATP"/>
    <property type="match status" value="1"/>
</dbReference>
<dbReference type="PROSITE" id="PS50011">
    <property type="entry name" value="PROTEIN_KINASE_DOM"/>
    <property type="match status" value="1"/>
</dbReference>
<dbReference type="PROSITE" id="PS00108">
    <property type="entry name" value="PROTEIN_KINASE_ST"/>
    <property type="match status" value="1"/>
</dbReference>
<sequence>MEEPRRLGGRYELGPVLGRGGMAEVYHAHDTRLGRQVAVKTLRADLARDPSFQARFRREAQSAASLNHPAIVAVYDTGEDYIDNVSIPYIVMEYVDGSTLRELLHSGRKLLPERTLEMTIGILQALEYSHRAGIVHRDIKPANVMLTRNGQVKVMDFGIARAMGDSGMTMTQTAAVIGTAQYLSPEQAKGEQVDARSDLYSTGCLLYELLTVRPPFVGDSPVAVAYQHVREEPQAPSVFDPEITPEMDAIVLKALVKDPDYRYQSADEMRVDIEACLDGQPVGATAAMGAMAAGGYGAYPDDQPTTALRSDGGGGATTMLPPMNPDDGGYGYDERPDRRRQQPRKKNTSTIFLVLAGVLVLVGAILIGKYAFSGDGGPGNDKVPVPAFIGLSKADAQQQADNIDLVLTFKQQECEDQPKGNICAQDPKQGTDVDKESTVNLVVSTGAPKVAVPNVIDKNIDEAKKQLEDKGFEVETKQTESSQDEGTILSQNPDPGKELEKGSTVTLEVAKAEEKATVPDVVGRTCDEAKAQVESGGDLTAVCTDQPTNDPNQVGKVISTTPQSSTQVDPGSKVTIVVGKAVEKTKVPEVRGKTLAEARQILQQSGFTNVQVAQGSPGDDNAKVFASNPQPGSEVDDPAATPITLMTVPGDGGNGNGGNGNGGAIAGLPGFGD</sequence>
<name>PKNX_STRCO</name>
<accession>Q9XA16</accession>
<evidence type="ECO:0000255" key="1">
    <source>
        <dbReference type="PROSITE-ProRule" id="PRU00159"/>
    </source>
</evidence>
<evidence type="ECO:0000255" key="2">
    <source>
        <dbReference type="PROSITE-ProRule" id="PRU00528"/>
    </source>
</evidence>
<evidence type="ECO:0000255" key="3">
    <source>
        <dbReference type="PROSITE-ProRule" id="PRU10027"/>
    </source>
</evidence>
<evidence type="ECO:0000256" key="4">
    <source>
        <dbReference type="SAM" id="MobiDB-lite"/>
    </source>
</evidence>
<organism>
    <name type="scientific">Streptomyces coelicolor (strain ATCC BAA-471 / A3(2) / M145)</name>
    <dbReference type="NCBI Taxonomy" id="100226"/>
    <lineage>
        <taxon>Bacteria</taxon>
        <taxon>Bacillati</taxon>
        <taxon>Actinomycetota</taxon>
        <taxon>Actinomycetes</taxon>
        <taxon>Kitasatosporales</taxon>
        <taxon>Streptomycetaceae</taxon>
        <taxon>Streptomyces</taxon>
        <taxon>Streptomyces albidoflavus group</taxon>
    </lineage>
</organism>
<gene>
    <name type="ordered locus">SCO3848</name>
    <name type="ORF">SCH69.18</name>
</gene>